<dbReference type="EC" id="6.3.5.-" evidence="1"/>
<dbReference type="EMBL" id="CP001016">
    <property type="protein sequence ID" value="ACB95501.1"/>
    <property type="molecule type" value="Genomic_DNA"/>
</dbReference>
<dbReference type="RefSeq" id="WP_012384858.1">
    <property type="nucleotide sequence ID" value="NC_010581.1"/>
</dbReference>
<dbReference type="SMR" id="B2IEA3"/>
<dbReference type="STRING" id="395963.Bind_1877"/>
<dbReference type="KEGG" id="bid:Bind_1877"/>
<dbReference type="eggNOG" id="COG0064">
    <property type="taxonomic scope" value="Bacteria"/>
</dbReference>
<dbReference type="HOGENOM" id="CLU_019240_1_1_5"/>
<dbReference type="OrthoDB" id="9804078at2"/>
<dbReference type="Proteomes" id="UP000001695">
    <property type="component" value="Chromosome"/>
</dbReference>
<dbReference type="GO" id="GO:0050566">
    <property type="term" value="F:asparaginyl-tRNA synthase (glutamine-hydrolyzing) activity"/>
    <property type="evidence" value="ECO:0007669"/>
    <property type="project" value="RHEA"/>
</dbReference>
<dbReference type="GO" id="GO:0005524">
    <property type="term" value="F:ATP binding"/>
    <property type="evidence" value="ECO:0007669"/>
    <property type="project" value="UniProtKB-KW"/>
</dbReference>
<dbReference type="GO" id="GO:0050567">
    <property type="term" value="F:glutaminyl-tRNA synthase (glutamine-hydrolyzing) activity"/>
    <property type="evidence" value="ECO:0007669"/>
    <property type="project" value="UniProtKB-UniRule"/>
</dbReference>
<dbReference type="GO" id="GO:0070681">
    <property type="term" value="P:glutaminyl-tRNAGln biosynthesis via transamidation"/>
    <property type="evidence" value="ECO:0007669"/>
    <property type="project" value="TreeGrafter"/>
</dbReference>
<dbReference type="GO" id="GO:0006412">
    <property type="term" value="P:translation"/>
    <property type="evidence" value="ECO:0007669"/>
    <property type="project" value="UniProtKB-UniRule"/>
</dbReference>
<dbReference type="FunFam" id="1.10.10.410:FF:000001">
    <property type="entry name" value="Aspartyl/glutamyl-tRNA(Asn/Gln) amidotransferase subunit B"/>
    <property type="match status" value="1"/>
</dbReference>
<dbReference type="FunFam" id="1.10.150.380:FF:000001">
    <property type="entry name" value="Aspartyl/glutamyl-tRNA(Asn/Gln) amidotransferase subunit B"/>
    <property type="match status" value="1"/>
</dbReference>
<dbReference type="Gene3D" id="1.10.10.410">
    <property type="match status" value="1"/>
</dbReference>
<dbReference type="Gene3D" id="1.10.150.380">
    <property type="entry name" value="GatB domain, N-terminal subdomain"/>
    <property type="match status" value="1"/>
</dbReference>
<dbReference type="HAMAP" id="MF_00121">
    <property type="entry name" value="GatB"/>
    <property type="match status" value="1"/>
</dbReference>
<dbReference type="InterPro" id="IPR017959">
    <property type="entry name" value="Asn/Gln-tRNA_amidoTrfase_suB/E"/>
</dbReference>
<dbReference type="InterPro" id="IPR006075">
    <property type="entry name" value="Asn/Gln-tRNA_Trfase_suB/E_cat"/>
</dbReference>
<dbReference type="InterPro" id="IPR018027">
    <property type="entry name" value="Asn/Gln_amidotransferase"/>
</dbReference>
<dbReference type="InterPro" id="IPR003789">
    <property type="entry name" value="Asn/Gln_tRNA_amidoTrase-B-like"/>
</dbReference>
<dbReference type="InterPro" id="IPR004413">
    <property type="entry name" value="GatB"/>
</dbReference>
<dbReference type="InterPro" id="IPR042114">
    <property type="entry name" value="GatB_C_1"/>
</dbReference>
<dbReference type="InterPro" id="IPR023168">
    <property type="entry name" value="GatB_Yqey_C_2"/>
</dbReference>
<dbReference type="InterPro" id="IPR017958">
    <property type="entry name" value="Gln-tRNA_amidoTrfase_suB_CS"/>
</dbReference>
<dbReference type="InterPro" id="IPR014746">
    <property type="entry name" value="Gln_synth/guanido_kin_cat_dom"/>
</dbReference>
<dbReference type="NCBIfam" id="TIGR00133">
    <property type="entry name" value="gatB"/>
    <property type="match status" value="1"/>
</dbReference>
<dbReference type="NCBIfam" id="NF004012">
    <property type="entry name" value="PRK05477.1-2"/>
    <property type="match status" value="1"/>
</dbReference>
<dbReference type="NCBIfam" id="NF004014">
    <property type="entry name" value="PRK05477.1-4"/>
    <property type="match status" value="1"/>
</dbReference>
<dbReference type="NCBIfam" id="NF004015">
    <property type="entry name" value="PRK05477.1-5"/>
    <property type="match status" value="1"/>
</dbReference>
<dbReference type="PANTHER" id="PTHR11659">
    <property type="entry name" value="GLUTAMYL-TRNA GLN AMIDOTRANSFERASE SUBUNIT B MITOCHONDRIAL AND PROKARYOTIC PET112-RELATED"/>
    <property type="match status" value="1"/>
</dbReference>
<dbReference type="PANTHER" id="PTHR11659:SF0">
    <property type="entry name" value="GLUTAMYL-TRNA(GLN) AMIDOTRANSFERASE SUBUNIT B, MITOCHONDRIAL"/>
    <property type="match status" value="1"/>
</dbReference>
<dbReference type="Pfam" id="PF02934">
    <property type="entry name" value="GatB_N"/>
    <property type="match status" value="1"/>
</dbReference>
<dbReference type="Pfam" id="PF02637">
    <property type="entry name" value="GatB_Yqey"/>
    <property type="match status" value="1"/>
</dbReference>
<dbReference type="SMART" id="SM00845">
    <property type="entry name" value="GatB_Yqey"/>
    <property type="match status" value="1"/>
</dbReference>
<dbReference type="SUPFAM" id="SSF89095">
    <property type="entry name" value="GatB/YqeY motif"/>
    <property type="match status" value="1"/>
</dbReference>
<dbReference type="SUPFAM" id="SSF55931">
    <property type="entry name" value="Glutamine synthetase/guanido kinase"/>
    <property type="match status" value="1"/>
</dbReference>
<dbReference type="PROSITE" id="PS01234">
    <property type="entry name" value="GATB"/>
    <property type="match status" value="1"/>
</dbReference>
<keyword id="KW-0067">ATP-binding</keyword>
<keyword id="KW-0436">Ligase</keyword>
<keyword id="KW-0547">Nucleotide-binding</keyword>
<keyword id="KW-0648">Protein biosynthesis</keyword>
<keyword id="KW-1185">Reference proteome</keyword>
<accession>B2IEA3</accession>
<organism>
    <name type="scientific">Beijerinckia indica subsp. indica (strain ATCC 9039 / DSM 1715 / NCIMB 8712)</name>
    <dbReference type="NCBI Taxonomy" id="395963"/>
    <lineage>
        <taxon>Bacteria</taxon>
        <taxon>Pseudomonadati</taxon>
        <taxon>Pseudomonadota</taxon>
        <taxon>Alphaproteobacteria</taxon>
        <taxon>Hyphomicrobiales</taxon>
        <taxon>Beijerinckiaceae</taxon>
        <taxon>Beijerinckia</taxon>
    </lineage>
</organism>
<protein>
    <recommendedName>
        <fullName evidence="1">Aspartyl/glutamyl-tRNA(Asn/Gln) amidotransferase subunit B</fullName>
        <shortName evidence="1">Asp/Glu-ADT subunit B</shortName>
        <ecNumber evidence="1">6.3.5.-</ecNumber>
    </recommendedName>
</protein>
<feature type="chain" id="PRO_1000095183" description="Aspartyl/glutamyl-tRNA(Asn/Gln) amidotransferase subunit B">
    <location>
        <begin position="1"/>
        <end position="495"/>
    </location>
</feature>
<evidence type="ECO:0000255" key="1">
    <source>
        <dbReference type="HAMAP-Rule" id="MF_00121"/>
    </source>
</evidence>
<name>GATB_BEII9</name>
<proteinExistence type="inferred from homology"/>
<comment type="function">
    <text evidence="1">Allows the formation of correctly charged Asn-tRNA(Asn) or Gln-tRNA(Gln) through the transamidation of misacylated Asp-tRNA(Asn) or Glu-tRNA(Gln) in organisms which lack either or both of asparaginyl-tRNA or glutaminyl-tRNA synthetases. The reaction takes place in the presence of glutamine and ATP through an activated phospho-Asp-tRNA(Asn) or phospho-Glu-tRNA(Gln).</text>
</comment>
<comment type="catalytic activity">
    <reaction evidence="1">
        <text>L-glutamyl-tRNA(Gln) + L-glutamine + ATP + H2O = L-glutaminyl-tRNA(Gln) + L-glutamate + ADP + phosphate + H(+)</text>
        <dbReference type="Rhea" id="RHEA:17521"/>
        <dbReference type="Rhea" id="RHEA-COMP:9681"/>
        <dbReference type="Rhea" id="RHEA-COMP:9684"/>
        <dbReference type="ChEBI" id="CHEBI:15377"/>
        <dbReference type="ChEBI" id="CHEBI:15378"/>
        <dbReference type="ChEBI" id="CHEBI:29985"/>
        <dbReference type="ChEBI" id="CHEBI:30616"/>
        <dbReference type="ChEBI" id="CHEBI:43474"/>
        <dbReference type="ChEBI" id="CHEBI:58359"/>
        <dbReference type="ChEBI" id="CHEBI:78520"/>
        <dbReference type="ChEBI" id="CHEBI:78521"/>
        <dbReference type="ChEBI" id="CHEBI:456216"/>
    </reaction>
</comment>
<comment type="catalytic activity">
    <reaction evidence="1">
        <text>L-aspartyl-tRNA(Asn) + L-glutamine + ATP + H2O = L-asparaginyl-tRNA(Asn) + L-glutamate + ADP + phosphate + 2 H(+)</text>
        <dbReference type="Rhea" id="RHEA:14513"/>
        <dbReference type="Rhea" id="RHEA-COMP:9674"/>
        <dbReference type="Rhea" id="RHEA-COMP:9677"/>
        <dbReference type="ChEBI" id="CHEBI:15377"/>
        <dbReference type="ChEBI" id="CHEBI:15378"/>
        <dbReference type="ChEBI" id="CHEBI:29985"/>
        <dbReference type="ChEBI" id="CHEBI:30616"/>
        <dbReference type="ChEBI" id="CHEBI:43474"/>
        <dbReference type="ChEBI" id="CHEBI:58359"/>
        <dbReference type="ChEBI" id="CHEBI:78515"/>
        <dbReference type="ChEBI" id="CHEBI:78516"/>
        <dbReference type="ChEBI" id="CHEBI:456216"/>
    </reaction>
</comment>
<comment type="subunit">
    <text evidence="1">Heterotrimer of A, B and C subunits.</text>
</comment>
<comment type="similarity">
    <text evidence="1">Belongs to the GatB/GatE family. GatB subfamily.</text>
</comment>
<sequence length="495" mass="53757">MNTHVKPSKLIKGATGDWEIIIGLEVHAQVTSRSKLFSGASTQFGAEPNSNVSLVDAAMPGMLPVINEECVAQAVRTGLGLKAQINLRSVFDRKNYFYPDLPQGYQISQYKSPIVGEGIVIVDVSPTEQIEVGIERLHLEQDAGKSLHDQSATDSFVDLNRSGVALMEIVSKPDMRSADEARAYVSKLRTILRYLGTCDGNMEQGSLRADVNVSVRRPGEPFGTRCEIKNVNSIRFIGQAIETEARRQIGILEDGGVIDQETRLFDPGKGETRSMRSKEEAHDYRYFPDPDLLPLEFDQAYVDGLASALPELPDAKKARFMNDYGLPAYDAGVLVADKETADYYETTVNYNGVKRDPKLVANWVTGDVAAYANSVGLPVSQTHLTPAQIATLVDLISEEVISGKIAKDVLAILINEDKAGDPRTIVEARGLKQVTDTGAIEAAVDAIIAANPDKVAQAQAKPTMLGWFVGQVMKQTGGKANPQAVNEILKAKLGI</sequence>
<gene>
    <name evidence="1" type="primary">gatB</name>
    <name type="ordered locus">Bind_1877</name>
</gene>
<reference key="1">
    <citation type="journal article" date="2010" name="J. Bacteriol.">
        <title>Complete genome sequence of Beijerinckia indica subsp. indica.</title>
        <authorList>
            <person name="Tamas I."/>
            <person name="Dedysh S.N."/>
            <person name="Liesack W."/>
            <person name="Stott M.B."/>
            <person name="Alam M."/>
            <person name="Murrell J.C."/>
            <person name="Dunfield P.F."/>
        </authorList>
    </citation>
    <scope>NUCLEOTIDE SEQUENCE [LARGE SCALE GENOMIC DNA]</scope>
    <source>
        <strain>ATCC 9039 / DSM 1715 / NCIMB 8712</strain>
    </source>
</reference>